<evidence type="ECO:0000255" key="1">
    <source>
        <dbReference type="HAMAP-Rule" id="MF_00146"/>
    </source>
</evidence>
<dbReference type="EC" id="3.5.4.13" evidence="1"/>
<dbReference type="EMBL" id="CP001463">
    <property type="protein sequence ID" value="ACS89452.1"/>
    <property type="molecule type" value="Genomic_DNA"/>
</dbReference>
<dbReference type="RefSeq" id="WP_015848672.1">
    <property type="nucleotide sequence ID" value="NC_012883.1"/>
</dbReference>
<dbReference type="SMR" id="C6A1F7"/>
<dbReference type="STRING" id="604354.TSIB_0386"/>
<dbReference type="GeneID" id="8095363"/>
<dbReference type="KEGG" id="tsi:TSIB_0386"/>
<dbReference type="eggNOG" id="arCOG04048">
    <property type="taxonomic scope" value="Archaea"/>
</dbReference>
<dbReference type="HOGENOM" id="CLU_087476_3_1_2"/>
<dbReference type="OrthoDB" id="33242at2157"/>
<dbReference type="UniPathway" id="UPA00610">
    <property type="reaction ID" value="UER00665"/>
</dbReference>
<dbReference type="Proteomes" id="UP000009079">
    <property type="component" value="Chromosome"/>
</dbReference>
<dbReference type="GO" id="GO:0008829">
    <property type="term" value="F:dCTP deaminase activity"/>
    <property type="evidence" value="ECO:0007669"/>
    <property type="project" value="UniProtKB-UniRule"/>
</dbReference>
<dbReference type="GO" id="GO:0000166">
    <property type="term" value="F:nucleotide binding"/>
    <property type="evidence" value="ECO:0007669"/>
    <property type="project" value="UniProtKB-KW"/>
</dbReference>
<dbReference type="GO" id="GO:0006226">
    <property type="term" value="P:dUMP biosynthetic process"/>
    <property type="evidence" value="ECO:0007669"/>
    <property type="project" value="UniProtKB-UniPathway"/>
</dbReference>
<dbReference type="GO" id="GO:0006229">
    <property type="term" value="P:dUTP biosynthetic process"/>
    <property type="evidence" value="ECO:0007669"/>
    <property type="project" value="UniProtKB-UniRule"/>
</dbReference>
<dbReference type="CDD" id="cd07557">
    <property type="entry name" value="trimeric_dUTPase"/>
    <property type="match status" value="1"/>
</dbReference>
<dbReference type="Gene3D" id="2.70.40.10">
    <property type="match status" value="1"/>
</dbReference>
<dbReference type="HAMAP" id="MF_00146">
    <property type="entry name" value="dCTP_deaminase"/>
    <property type="match status" value="1"/>
</dbReference>
<dbReference type="InterPro" id="IPR011962">
    <property type="entry name" value="dCTP_deaminase"/>
</dbReference>
<dbReference type="InterPro" id="IPR036157">
    <property type="entry name" value="dUTPase-like_sf"/>
</dbReference>
<dbReference type="InterPro" id="IPR033704">
    <property type="entry name" value="dUTPase_trimeric"/>
</dbReference>
<dbReference type="NCBIfam" id="TIGR02274">
    <property type="entry name" value="dCTP_deam"/>
    <property type="match status" value="1"/>
</dbReference>
<dbReference type="PANTHER" id="PTHR42680">
    <property type="entry name" value="DCTP DEAMINASE"/>
    <property type="match status" value="1"/>
</dbReference>
<dbReference type="PANTHER" id="PTHR42680:SF3">
    <property type="entry name" value="DCTP DEAMINASE"/>
    <property type="match status" value="1"/>
</dbReference>
<dbReference type="Pfam" id="PF22769">
    <property type="entry name" value="DCD"/>
    <property type="match status" value="1"/>
</dbReference>
<dbReference type="SUPFAM" id="SSF51283">
    <property type="entry name" value="dUTPase-like"/>
    <property type="match status" value="1"/>
</dbReference>
<protein>
    <recommendedName>
        <fullName evidence="1">dCTP deaminase</fullName>
        <ecNumber evidence="1">3.5.4.13</ecNumber>
    </recommendedName>
    <alternativeName>
        <fullName evidence="1">Deoxycytidine triphosphate deaminase</fullName>
    </alternativeName>
</protein>
<keyword id="KW-0378">Hydrolase</keyword>
<keyword id="KW-0546">Nucleotide metabolism</keyword>
<keyword id="KW-0547">Nucleotide-binding</keyword>
<keyword id="KW-1185">Reference proteome</keyword>
<proteinExistence type="inferred from homology"/>
<reference key="1">
    <citation type="journal article" date="2009" name="Appl. Environ. Microbiol.">
        <title>Metabolic versatility and indigenous origin of the archaeon Thermococcus sibiricus, isolated from a siberian oil reservoir, as revealed by genome analysis.</title>
        <authorList>
            <person name="Mardanov A.V."/>
            <person name="Ravin N.V."/>
            <person name="Svetlitchnyi V.A."/>
            <person name="Beletsky A.V."/>
            <person name="Miroshnichenko M.L."/>
            <person name="Bonch-Osmolovskaya E.A."/>
            <person name="Skryabin K.G."/>
        </authorList>
    </citation>
    <scope>NUCLEOTIDE SEQUENCE [LARGE SCALE GENOMIC DNA]</scope>
    <source>
        <strain>DSM 12597 / MM 739</strain>
    </source>
</reference>
<gene>
    <name evidence="1" type="primary">dcd</name>
    <name type="ordered locus">TSIB_0386</name>
</gene>
<sequence length="156" mass="17986">MILPDHKIRKEILIEPFNEKSLQPAGYDLRVGKEAMVNGKFINVEEEGKLVIPPKGHALILTLERVKLPDDVMGDMRLRSTFAREGLLGSFAWVDPGWDGNLTLAFFNSSEEEVILHYEERFVQIAFHRLEEPSKNPYRGIYQGSQHLKLSKRKIR</sequence>
<feature type="chain" id="PRO_1000203369" description="dCTP deaminase">
    <location>
        <begin position="1"/>
        <end position="156"/>
    </location>
</feature>
<feature type="binding site" evidence="1">
    <location>
        <begin position="79"/>
        <end position="84"/>
    </location>
    <ligand>
        <name>dCTP</name>
        <dbReference type="ChEBI" id="CHEBI:61481"/>
    </ligand>
</feature>
<feature type="binding site" evidence="1">
    <location>
        <position position="95"/>
    </location>
    <ligand>
        <name>dCTP</name>
        <dbReference type="ChEBI" id="CHEBI:61481"/>
    </ligand>
</feature>
<feature type="binding site" evidence="1">
    <location>
        <position position="124"/>
    </location>
    <ligand>
        <name>dCTP</name>
        <dbReference type="ChEBI" id="CHEBI:61481"/>
    </ligand>
</feature>
<feature type="binding site" evidence="1">
    <location>
        <position position="138"/>
    </location>
    <ligand>
        <name>dCTP</name>
        <dbReference type="ChEBI" id="CHEBI:61481"/>
    </ligand>
</feature>
<comment type="function">
    <text evidence="1">Catalyzes the deamination of dCTP to dUTP.</text>
</comment>
<comment type="catalytic activity">
    <reaction evidence="1">
        <text>dCTP + H2O + H(+) = dUTP + NH4(+)</text>
        <dbReference type="Rhea" id="RHEA:22680"/>
        <dbReference type="ChEBI" id="CHEBI:15377"/>
        <dbReference type="ChEBI" id="CHEBI:15378"/>
        <dbReference type="ChEBI" id="CHEBI:28938"/>
        <dbReference type="ChEBI" id="CHEBI:61481"/>
        <dbReference type="ChEBI" id="CHEBI:61555"/>
        <dbReference type="EC" id="3.5.4.13"/>
    </reaction>
</comment>
<comment type="pathway">
    <text evidence="1">Pyrimidine metabolism; dUMP biosynthesis; dUMP from dCTP (dUTP route): step 1/2.</text>
</comment>
<comment type="subunit">
    <text evidence="1">Homotrimer.</text>
</comment>
<comment type="similarity">
    <text evidence="1">Belongs to the dCTP deaminase family.</text>
</comment>
<organism>
    <name type="scientific">Thermococcus sibiricus (strain DSM 12597 / MM 739)</name>
    <dbReference type="NCBI Taxonomy" id="604354"/>
    <lineage>
        <taxon>Archaea</taxon>
        <taxon>Methanobacteriati</taxon>
        <taxon>Methanobacteriota</taxon>
        <taxon>Thermococci</taxon>
        <taxon>Thermococcales</taxon>
        <taxon>Thermococcaceae</taxon>
        <taxon>Thermococcus</taxon>
    </lineage>
</organism>
<accession>C6A1F7</accession>
<name>DCD_THESM</name>